<accession>B7UK40</accession>
<dbReference type="EMBL" id="FM180568">
    <property type="protein sequence ID" value="CAS11127.1"/>
    <property type="molecule type" value="Genomic_DNA"/>
</dbReference>
<dbReference type="RefSeq" id="WP_001138117.1">
    <property type="nucleotide sequence ID" value="NC_011601.1"/>
</dbReference>
<dbReference type="SMR" id="B7UK40"/>
<dbReference type="GeneID" id="98390438"/>
<dbReference type="KEGG" id="ecg:E2348C_3579"/>
<dbReference type="HOGENOM" id="CLU_144911_0_1_6"/>
<dbReference type="Proteomes" id="UP000008205">
    <property type="component" value="Chromosome"/>
</dbReference>
<dbReference type="GO" id="GO:0005737">
    <property type="term" value="C:cytoplasm"/>
    <property type="evidence" value="ECO:0007669"/>
    <property type="project" value="UniProtKB-ARBA"/>
</dbReference>
<dbReference type="GO" id="GO:0015935">
    <property type="term" value="C:small ribosomal subunit"/>
    <property type="evidence" value="ECO:0007669"/>
    <property type="project" value="InterPro"/>
</dbReference>
<dbReference type="GO" id="GO:0019843">
    <property type="term" value="F:rRNA binding"/>
    <property type="evidence" value="ECO:0007669"/>
    <property type="project" value="UniProtKB-UniRule"/>
</dbReference>
<dbReference type="GO" id="GO:0003735">
    <property type="term" value="F:structural constituent of ribosome"/>
    <property type="evidence" value="ECO:0007669"/>
    <property type="project" value="InterPro"/>
</dbReference>
<dbReference type="GO" id="GO:0000028">
    <property type="term" value="P:ribosomal small subunit assembly"/>
    <property type="evidence" value="ECO:0007669"/>
    <property type="project" value="TreeGrafter"/>
</dbReference>
<dbReference type="GO" id="GO:0006412">
    <property type="term" value="P:translation"/>
    <property type="evidence" value="ECO:0007669"/>
    <property type="project" value="UniProtKB-UniRule"/>
</dbReference>
<dbReference type="FunFam" id="3.30.860.10:FF:000001">
    <property type="entry name" value="30S ribosomal protein S19"/>
    <property type="match status" value="1"/>
</dbReference>
<dbReference type="Gene3D" id="3.30.860.10">
    <property type="entry name" value="30s Ribosomal Protein S19, Chain A"/>
    <property type="match status" value="1"/>
</dbReference>
<dbReference type="HAMAP" id="MF_00531">
    <property type="entry name" value="Ribosomal_uS19"/>
    <property type="match status" value="1"/>
</dbReference>
<dbReference type="InterPro" id="IPR002222">
    <property type="entry name" value="Ribosomal_uS19"/>
</dbReference>
<dbReference type="InterPro" id="IPR005732">
    <property type="entry name" value="Ribosomal_uS19_bac-type"/>
</dbReference>
<dbReference type="InterPro" id="IPR020934">
    <property type="entry name" value="Ribosomal_uS19_CS"/>
</dbReference>
<dbReference type="InterPro" id="IPR023575">
    <property type="entry name" value="Ribosomal_uS19_SF"/>
</dbReference>
<dbReference type="NCBIfam" id="TIGR01050">
    <property type="entry name" value="rpsS_bact"/>
    <property type="match status" value="1"/>
</dbReference>
<dbReference type="PANTHER" id="PTHR11880">
    <property type="entry name" value="RIBOSOMAL PROTEIN S19P FAMILY MEMBER"/>
    <property type="match status" value="1"/>
</dbReference>
<dbReference type="PANTHER" id="PTHR11880:SF8">
    <property type="entry name" value="SMALL RIBOSOMAL SUBUNIT PROTEIN US19M"/>
    <property type="match status" value="1"/>
</dbReference>
<dbReference type="Pfam" id="PF00203">
    <property type="entry name" value="Ribosomal_S19"/>
    <property type="match status" value="1"/>
</dbReference>
<dbReference type="PIRSF" id="PIRSF002144">
    <property type="entry name" value="Ribosomal_S19"/>
    <property type="match status" value="1"/>
</dbReference>
<dbReference type="PRINTS" id="PR00975">
    <property type="entry name" value="RIBOSOMALS19"/>
</dbReference>
<dbReference type="SUPFAM" id="SSF54570">
    <property type="entry name" value="Ribosomal protein S19"/>
    <property type="match status" value="1"/>
</dbReference>
<dbReference type="PROSITE" id="PS00323">
    <property type="entry name" value="RIBOSOMAL_S19"/>
    <property type="match status" value="1"/>
</dbReference>
<comment type="function">
    <text evidence="1">Protein S19 forms a complex with S13 that binds strongly to the 16S ribosomal RNA.</text>
</comment>
<comment type="similarity">
    <text evidence="1">Belongs to the universal ribosomal protein uS19 family.</text>
</comment>
<protein>
    <recommendedName>
        <fullName evidence="1">Small ribosomal subunit protein uS19</fullName>
    </recommendedName>
    <alternativeName>
        <fullName evidence="2">30S ribosomal protein S19</fullName>
    </alternativeName>
</protein>
<keyword id="KW-1185">Reference proteome</keyword>
<keyword id="KW-0687">Ribonucleoprotein</keyword>
<keyword id="KW-0689">Ribosomal protein</keyword>
<keyword id="KW-0694">RNA-binding</keyword>
<keyword id="KW-0699">rRNA-binding</keyword>
<proteinExistence type="inferred from homology"/>
<feature type="chain" id="PRO_1000146389" description="Small ribosomal subunit protein uS19">
    <location>
        <begin position="1"/>
        <end position="92"/>
    </location>
</feature>
<evidence type="ECO:0000255" key="1">
    <source>
        <dbReference type="HAMAP-Rule" id="MF_00531"/>
    </source>
</evidence>
<evidence type="ECO:0000305" key="2"/>
<name>RS19_ECO27</name>
<gene>
    <name evidence="1" type="primary">rpsS</name>
    <name type="ordered locus">E2348C_3579</name>
</gene>
<organism>
    <name type="scientific">Escherichia coli O127:H6 (strain E2348/69 / EPEC)</name>
    <dbReference type="NCBI Taxonomy" id="574521"/>
    <lineage>
        <taxon>Bacteria</taxon>
        <taxon>Pseudomonadati</taxon>
        <taxon>Pseudomonadota</taxon>
        <taxon>Gammaproteobacteria</taxon>
        <taxon>Enterobacterales</taxon>
        <taxon>Enterobacteriaceae</taxon>
        <taxon>Escherichia</taxon>
    </lineage>
</organism>
<reference key="1">
    <citation type="journal article" date="2009" name="J. Bacteriol.">
        <title>Complete genome sequence and comparative genome analysis of enteropathogenic Escherichia coli O127:H6 strain E2348/69.</title>
        <authorList>
            <person name="Iguchi A."/>
            <person name="Thomson N.R."/>
            <person name="Ogura Y."/>
            <person name="Saunders D."/>
            <person name="Ooka T."/>
            <person name="Henderson I.R."/>
            <person name="Harris D."/>
            <person name="Asadulghani M."/>
            <person name="Kurokawa K."/>
            <person name="Dean P."/>
            <person name="Kenny B."/>
            <person name="Quail M.A."/>
            <person name="Thurston S."/>
            <person name="Dougan G."/>
            <person name="Hayashi T."/>
            <person name="Parkhill J."/>
            <person name="Frankel G."/>
        </authorList>
    </citation>
    <scope>NUCLEOTIDE SEQUENCE [LARGE SCALE GENOMIC DNA]</scope>
    <source>
        <strain>E2348/69 / EPEC</strain>
    </source>
</reference>
<sequence length="92" mass="10430">MPRSLKKGPFIDLHLLKKVEKAVESGDKKPLRTWSRRSTIFPNMIGLTIAVHNGRQHVPVFVTDEMVGHKLGEFAPTRTYRGHAADKKAKKK</sequence>